<keyword id="KW-0058">Aromatic hydrocarbons catabolism</keyword>
<keyword id="KW-0223">Dioxygenase</keyword>
<keyword id="KW-0408">Iron</keyword>
<keyword id="KW-0560">Oxidoreductase</keyword>
<keyword id="KW-1185">Reference proteome</keyword>
<accession>P0ABS0</accession>
<accession>P54711</accession>
<accession>P77048</accession>
<accession>P77461</accession>
<proteinExistence type="inferred from homology"/>
<reference key="1">
    <citation type="journal article" date="2001" name="Nature">
        <title>Genome sequence of enterohaemorrhagic Escherichia coli O157:H7.</title>
        <authorList>
            <person name="Perna N.T."/>
            <person name="Plunkett G. III"/>
            <person name="Burland V."/>
            <person name="Mau B."/>
            <person name="Glasner J.D."/>
            <person name="Rose D.J."/>
            <person name="Mayhew G.F."/>
            <person name="Evans P.S."/>
            <person name="Gregor J."/>
            <person name="Kirkpatrick H.A."/>
            <person name="Posfai G."/>
            <person name="Hackett J."/>
            <person name="Klink S."/>
            <person name="Boutin A."/>
            <person name="Shao Y."/>
            <person name="Miller L."/>
            <person name="Grotbeck E.J."/>
            <person name="Davis N.W."/>
            <person name="Lim A."/>
            <person name="Dimalanta E.T."/>
            <person name="Potamousis K."/>
            <person name="Apodaca J."/>
            <person name="Anantharaman T.S."/>
            <person name="Lin J."/>
            <person name="Yen G."/>
            <person name="Schwartz D.C."/>
            <person name="Welch R.A."/>
            <person name="Blattner F.R."/>
        </authorList>
    </citation>
    <scope>NUCLEOTIDE SEQUENCE [LARGE SCALE GENOMIC DNA]</scope>
    <source>
        <strain>O157:H7 / EDL933 / ATCC 700927 / EHEC</strain>
    </source>
</reference>
<reference key="2">
    <citation type="journal article" date="2001" name="DNA Res.">
        <title>Complete genome sequence of enterohemorrhagic Escherichia coli O157:H7 and genomic comparison with a laboratory strain K-12.</title>
        <authorList>
            <person name="Hayashi T."/>
            <person name="Makino K."/>
            <person name="Ohnishi M."/>
            <person name="Kurokawa K."/>
            <person name="Ishii K."/>
            <person name="Yokoyama K."/>
            <person name="Han C.-G."/>
            <person name="Ohtsubo E."/>
            <person name="Nakayama K."/>
            <person name="Murata T."/>
            <person name="Tanaka M."/>
            <person name="Tobe T."/>
            <person name="Iida T."/>
            <person name="Takami H."/>
            <person name="Honda T."/>
            <person name="Sasakawa C."/>
            <person name="Ogasawara N."/>
            <person name="Yasunaga T."/>
            <person name="Kuhara S."/>
            <person name="Shiba T."/>
            <person name="Hattori M."/>
            <person name="Shinagawa H."/>
        </authorList>
    </citation>
    <scope>NUCLEOTIDE SEQUENCE [LARGE SCALE GENOMIC DNA]</scope>
    <source>
        <strain>O157:H7 / Sakai / RIMD 0509952 / EHEC</strain>
    </source>
</reference>
<name>MHPB_ECO57</name>
<organism>
    <name type="scientific">Escherichia coli O157:H7</name>
    <dbReference type="NCBI Taxonomy" id="83334"/>
    <lineage>
        <taxon>Bacteria</taxon>
        <taxon>Pseudomonadati</taxon>
        <taxon>Pseudomonadota</taxon>
        <taxon>Gammaproteobacteria</taxon>
        <taxon>Enterobacterales</taxon>
        <taxon>Enterobacteriaceae</taxon>
        <taxon>Escherichia</taxon>
    </lineage>
</organism>
<sequence length="314" mass="34196">MHAYLHCLSHSPLVGYVDPAQEVLDEVNGVIASARERIAAFSPELVVLFAPDHYNGFFYDVMPPFCLGVGATAIGDFGSAAGELPVPVELAEACAHAVMKSGIDLAVSYCMQVDHGFAQPLEFLLGGLDKVPVLPVFINGVATPLPGFQRTRMLGEAIGRFTSTLNKRVLFLGSGGLSHQPPVPELAKADAHMRDRLLGSGKDLPASERELRQQRVISAAEKFVEDQRTLHPLNPIWDNQFMTLLEQGRIQELDAVSNEELSAIAGKSTHEIKTWVAAFAAISAFGNWRSEGRYYRPIPEWIAGFGSLSARTEN</sequence>
<dbReference type="EC" id="1.13.11.16" evidence="1"/>
<dbReference type="EMBL" id="AE005174">
    <property type="protein sequence ID" value="AAG54699.1"/>
    <property type="molecule type" value="Genomic_DNA"/>
</dbReference>
<dbReference type="EMBL" id="BA000007">
    <property type="protein sequence ID" value="BAB33826.1"/>
    <property type="molecule type" value="Genomic_DNA"/>
</dbReference>
<dbReference type="PIR" id="C90679">
    <property type="entry name" value="C90679"/>
</dbReference>
<dbReference type="PIR" id="G85529">
    <property type="entry name" value="G85529"/>
</dbReference>
<dbReference type="RefSeq" id="NP_308430.1">
    <property type="nucleotide sequence ID" value="NC_002695.1"/>
</dbReference>
<dbReference type="RefSeq" id="WP_000543457.1">
    <property type="nucleotide sequence ID" value="NZ_VOAI01000005.1"/>
</dbReference>
<dbReference type="SMR" id="P0ABS0"/>
<dbReference type="STRING" id="155864.Z0446"/>
<dbReference type="GeneID" id="914505"/>
<dbReference type="GeneID" id="93777107"/>
<dbReference type="KEGG" id="ece:Z0446"/>
<dbReference type="KEGG" id="ecs:ECs_0403"/>
<dbReference type="PATRIC" id="fig|386585.9.peg.498"/>
<dbReference type="eggNOG" id="COG3384">
    <property type="taxonomic scope" value="Bacteria"/>
</dbReference>
<dbReference type="HOGENOM" id="CLU_078149_0_0_6"/>
<dbReference type="OMA" id="MDVDHGT"/>
<dbReference type="UniPathway" id="UPA00714"/>
<dbReference type="Proteomes" id="UP000000558">
    <property type="component" value="Chromosome"/>
</dbReference>
<dbReference type="Proteomes" id="UP000002519">
    <property type="component" value="Chromosome"/>
</dbReference>
<dbReference type="GO" id="GO:0047070">
    <property type="term" value="F:3-carboxyethylcatechol 2,3-dioxygenase activity"/>
    <property type="evidence" value="ECO:0007669"/>
    <property type="project" value="UniProtKB-UniRule"/>
</dbReference>
<dbReference type="GO" id="GO:0008198">
    <property type="term" value="F:ferrous iron binding"/>
    <property type="evidence" value="ECO:0007669"/>
    <property type="project" value="InterPro"/>
</dbReference>
<dbReference type="GO" id="GO:0019380">
    <property type="term" value="P:3-phenylpropionate catabolic process"/>
    <property type="evidence" value="ECO:0007669"/>
    <property type="project" value="UniProtKB-UniRule"/>
</dbReference>
<dbReference type="CDD" id="cd07365">
    <property type="entry name" value="MhpB_like"/>
    <property type="match status" value="1"/>
</dbReference>
<dbReference type="Gene3D" id="3.40.830.10">
    <property type="entry name" value="LigB-like"/>
    <property type="match status" value="1"/>
</dbReference>
<dbReference type="HAMAP" id="MF_01653">
    <property type="entry name" value="MhpB"/>
    <property type="match status" value="1"/>
</dbReference>
<dbReference type="InterPro" id="IPR023789">
    <property type="entry name" value="DHPP/DHXA_dioxygenase"/>
</dbReference>
<dbReference type="InterPro" id="IPR004183">
    <property type="entry name" value="Xdiol_dOase_suB"/>
</dbReference>
<dbReference type="NCBIfam" id="NF009907">
    <property type="entry name" value="PRK13370.1-1"/>
    <property type="match status" value="1"/>
</dbReference>
<dbReference type="NCBIfam" id="NF009910">
    <property type="entry name" value="PRK13370.1-4"/>
    <property type="match status" value="1"/>
</dbReference>
<dbReference type="Pfam" id="PF02900">
    <property type="entry name" value="LigB"/>
    <property type="match status" value="1"/>
</dbReference>
<dbReference type="SUPFAM" id="SSF53213">
    <property type="entry name" value="LigB-like"/>
    <property type="match status" value="1"/>
</dbReference>
<gene>
    <name evidence="1" type="primary">mhpB</name>
    <name type="ordered locus">Z0446</name>
    <name type="ordered locus">ECs0403</name>
</gene>
<feature type="chain" id="PRO_0000085104" description="2,3-dihydroxyphenylpropionate/2,3-dihydroxicinnamic acid 1,2-dioxygenase">
    <location>
        <begin position="1"/>
        <end position="314"/>
    </location>
</feature>
<feature type="active site" description="Proton donor" evidence="1">
    <location>
        <position position="115"/>
    </location>
</feature>
<feature type="active site" description="Proton acceptor" evidence="1">
    <location>
        <position position="179"/>
    </location>
</feature>
<protein>
    <recommendedName>
        <fullName evidence="1">2,3-dihydroxyphenylpropionate/2,3-dihydroxicinnamic acid 1,2-dioxygenase</fullName>
        <ecNumber evidence="1">1.13.11.16</ecNumber>
    </recommendedName>
    <alternativeName>
        <fullName evidence="1">3-carboxyethylcatechol 2,3-dioxygenase</fullName>
    </alternativeName>
</protein>
<comment type="function">
    <text evidence="1">Catalyzes the non-heme iron(II)-dependent oxidative cleavage of 2,3-dihydroxyphenylpropionic acid and 2,3-dihydroxicinnamic acid into 2-hydroxy-6-ketononadienedioate and 2-hydroxy-6-ketononatrienedioate, respectively.</text>
</comment>
<comment type="catalytic activity">
    <reaction evidence="1">
        <text>3-(2,3-dihydroxyphenyl)propanoate + O2 = (2Z,4E)-2-hydroxy-6-oxonona-2,4-dienedioate + H(+)</text>
        <dbReference type="Rhea" id="RHEA:23840"/>
        <dbReference type="ChEBI" id="CHEBI:15378"/>
        <dbReference type="ChEBI" id="CHEBI:15379"/>
        <dbReference type="ChEBI" id="CHEBI:46951"/>
        <dbReference type="ChEBI" id="CHEBI:66887"/>
        <dbReference type="EC" id="1.13.11.16"/>
    </reaction>
</comment>
<comment type="catalytic activity">
    <reaction evidence="1">
        <text>(2E)-3-(2,3-dihydroxyphenyl)prop-2-enoate + O2 = (2Z,4E,7E)-2-hydroxy-6-oxonona-2,4,7-trienedioate + H(+)</text>
        <dbReference type="Rhea" id="RHEA:25054"/>
        <dbReference type="ChEBI" id="CHEBI:15378"/>
        <dbReference type="ChEBI" id="CHEBI:15379"/>
        <dbReference type="ChEBI" id="CHEBI:58642"/>
        <dbReference type="ChEBI" id="CHEBI:66888"/>
        <dbReference type="EC" id="1.13.11.16"/>
    </reaction>
</comment>
<comment type="cofactor">
    <cofactor evidence="1">
        <name>Fe(2+)</name>
        <dbReference type="ChEBI" id="CHEBI:29033"/>
    </cofactor>
</comment>
<comment type="pathway">
    <text evidence="1">Aromatic compound metabolism; 3-phenylpropanoate degradation.</text>
</comment>
<comment type="subunit">
    <text evidence="1">Homotetramer.</text>
</comment>
<comment type="similarity">
    <text evidence="1">Belongs to the LigB/MhpB extradiol dioxygenase family.</text>
</comment>
<evidence type="ECO:0000255" key="1">
    <source>
        <dbReference type="HAMAP-Rule" id="MF_01653"/>
    </source>
</evidence>